<feature type="chain" id="PRO_0000354344" description="Small ribosomal subunit protein uS19c">
    <location>
        <begin position="1"/>
        <end position="92"/>
    </location>
</feature>
<protein>
    <recommendedName>
        <fullName evidence="1">Small ribosomal subunit protein uS19c</fullName>
    </recommendedName>
    <alternativeName>
        <fullName evidence="2">30S ribosomal protein S19, chloroplastic</fullName>
    </alternativeName>
</protein>
<gene>
    <name evidence="1" type="primary">rps19</name>
</gene>
<sequence length="92" mass="10608">MTRSLKKNPFVAKHLLRKIEKLNTKAEKEIIITWSRASTIIPTMIGHTIAIHNGREHLPVYIIDLMVGHKLGEFSPTINFRGHAKNDNRSRR</sequence>
<dbReference type="EMBL" id="AP009372">
    <property type="protein sequence ID" value="BAF50326.1"/>
    <property type="molecule type" value="Genomic_DNA"/>
</dbReference>
<dbReference type="RefSeq" id="YP_001123502.1">
    <property type="nucleotide sequence ID" value="NC_009271.1"/>
</dbReference>
<dbReference type="SMR" id="A4QKX1"/>
<dbReference type="GeneID" id="4962637"/>
<dbReference type="GO" id="GO:0009507">
    <property type="term" value="C:chloroplast"/>
    <property type="evidence" value="ECO:0007669"/>
    <property type="project" value="UniProtKB-SubCell"/>
</dbReference>
<dbReference type="GO" id="GO:0005763">
    <property type="term" value="C:mitochondrial small ribosomal subunit"/>
    <property type="evidence" value="ECO:0007669"/>
    <property type="project" value="TreeGrafter"/>
</dbReference>
<dbReference type="GO" id="GO:0019843">
    <property type="term" value="F:rRNA binding"/>
    <property type="evidence" value="ECO:0007669"/>
    <property type="project" value="UniProtKB-UniRule"/>
</dbReference>
<dbReference type="GO" id="GO:0003735">
    <property type="term" value="F:structural constituent of ribosome"/>
    <property type="evidence" value="ECO:0007669"/>
    <property type="project" value="InterPro"/>
</dbReference>
<dbReference type="GO" id="GO:0000028">
    <property type="term" value="P:ribosomal small subunit assembly"/>
    <property type="evidence" value="ECO:0007669"/>
    <property type="project" value="TreeGrafter"/>
</dbReference>
<dbReference type="GO" id="GO:0006412">
    <property type="term" value="P:translation"/>
    <property type="evidence" value="ECO:0007669"/>
    <property type="project" value="UniProtKB-UniRule"/>
</dbReference>
<dbReference type="FunFam" id="3.30.860.10:FF:000001">
    <property type="entry name" value="30S ribosomal protein S19"/>
    <property type="match status" value="1"/>
</dbReference>
<dbReference type="Gene3D" id="3.30.860.10">
    <property type="entry name" value="30s Ribosomal Protein S19, Chain A"/>
    <property type="match status" value="1"/>
</dbReference>
<dbReference type="HAMAP" id="MF_00531">
    <property type="entry name" value="Ribosomal_uS19"/>
    <property type="match status" value="1"/>
</dbReference>
<dbReference type="InterPro" id="IPR002222">
    <property type="entry name" value="Ribosomal_uS19"/>
</dbReference>
<dbReference type="InterPro" id="IPR005732">
    <property type="entry name" value="Ribosomal_uS19_bac-type"/>
</dbReference>
<dbReference type="InterPro" id="IPR020934">
    <property type="entry name" value="Ribosomal_uS19_CS"/>
</dbReference>
<dbReference type="InterPro" id="IPR023575">
    <property type="entry name" value="Ribosomal_uS19_SF"/>
</dbReference>
<dbReference type="NCBIfam" id="TIGR01050">
    <property type="entry name" value="rpsS_bact"/>
    <property type="match status" value="1"/>
</dbReference>
<dbReference type="PANTHER" id="PTHR11880">
    <property type="entry name" value="RIBOSOMAL PROTEIN S19P FAMILY MEMBER"/>
    <property type="match status" value="1"/>
</dbReference>
<dbReference type="PANTHER" id="PTHR11880:SF8">
    <property type="entry name" value="SMALL RIBOSOMAL SUBUNIT PROTEIN US19M"/>
    <property type="match status" value="1"/>
</dbReference>
<dbReference type="Pfam" id="PF00203">
    <property type="entry name" value="Ribosomal_S19"/>
    <property type="match status" value="1"/>
</dbReference>
<dbReference type="PIRSF" id="PIRSF002144">
    <property type="entry name" value="Ribosomal_S19"/>
    <property type="match status" value="1"/>
</dbReference>
<dbReference type="PRINTS" id="PR00975">
    <property type="entry name" value="RIBOSOMALS19"/>
</dbReference>
<dbReference type="SUPFAM" id="SSF54570">
    <property type="entry name" value="Ribosomal protein S19"/>
    <property type="match status" value="1"/>
</dbReference>
<dbReference type="PROSITE" id="PS00323">
    <property type="entry name" value="RIBOSOMAL_S19"/>
    <property type="match status" value="1"/>
</dbReference>
<accession>A4QKX1</accession>
<comment type="function">
    <text evidence="1">Protein S19 forms a complex with S13 that binds strongly to the 16S ribosomal RNA.</text>
</comment>
<comment type="subcellular location">
    <subcellularLocation>
        <location>Plastid</location>
        <location>Chloroplast</location>
    </subcellularLocation>
</comment>
<comment type="similarity">
    <text evidence="1">Belongs to the universal ribosomal protein uS19 family.</text>
</comment>
<reference key="1">
    <citation type="submission" date="2007-03" db="EMBL/GenBank/DDBJ databases">
        <title>Sequencing analysis of Crucihimalaya wallichii chloroplast DNA.</title>
        <authorList>
            <person name="Hosouchi T."/>
            <person name="Tsuruoka H."/>
            <person name="Kotani H."/>
        </authorList>
    </citation>
    <scope>NUCLEOTIDE SEQUENCE [LARGE SCALE GENOMIC DNA]</scope>
</reference>
<proteinExistence type="inferred from homology"/>
<organism>
    <name type="scientific">Crucihimalaya wallichii</name>
    <name type="common">Rock-cress</name>
    <name type="synonym">Arabidopsis campestris</name>
    <dbReference type="NCBI Taxonomy" id="78192"/>
    <lineage>
        <taxon>Eukaryota</taxon>
        <taxon>Viridiplantae</taxon>
        <taxon>Streptophyta</taxon>
        <taxon>Embryophyta</taxon>
        <taxon>Tracheophyta</taxon>
        <taxon>Spermatophyta</taxon>
        <taxon>Magnoliopsida</taxon>
        <taxon>eudicotyledons</taxon>
        <taxon>Gunneridae</taxon>
        <taxon>Pentapetalae</taxon>
        <taxon>rosids</taxon>
        <taxon>malvids</taxon>
        <taxon>Brassicales</taxon>
        <taxon>Brassicaceae</taxon>
        <taxon>Crucihimalayeae</taxon>
        <taxon>Crucihimalaya</taxon>
    </lineage>
</organism>
<keyword id="KW-0150">Chloroplast</keyword>
<keyword id="KW-0934">Plastid</keyword>
<keyword id="KW-0687">Ribonucleoprotein</keyword>
<keyword id="KW-0689">Ribosomal protein</keyword>
<keyword id="KW-0694">RNA-binding</keyword>
<keyword id="KW-0699">rRNA-binding</keyword>
<evidence type="ECO:0000255" key="1">
    <source>
        <dbReference type="HAMAP-Rule" id="MF_00531"/>
    </source>
</evidence>
<evidence type="ECO:0000305" key="2"/>
<geneLocation type="chloroplast"/>
<name>RR19_CRUWA</name>